<name>GATB_CERS5</name>
<reference key="1">
    <citation type="submission" date="2007-04" db="EMBL/GenBank/DDBJ databases">
        <title>Complete sequence of chromosome of Rhodobacter sphaeroides ATCC 17025.</title>
        <authorList>
            <consortium name="US DOE Joint Genome Institute"/>
            <person name="Copeland A."/>
            <person name="Lucas S."/>
            <person name="Lapidus A."/>
            <person name="Barry K."/>
            <person name="Detter J.C."/>
            <person name="Glavina del Rio T."/>
            <person name="Hammon N."/>
            <person name="Israni S."/>
            <person name="Dalin E."/>
            <person name="Tice H."/>
            <person name="Pitluck S."/>
            <person name="Chertkov O."/>
            <person name="Brettin T."/>
            <person name="Bruce D."/>
            <person name="Han C."/>
            <person name="Schmutz J."/>
            <person name="Larimer F."/>
            <person name="Land M."/>
            <person name="Hauser L."/>
            <person name="Kyrpides N."/>
            <person name="Kim E."/>
            <person name="Richardson P."/>
            <person name="Mackenzie C."/>
            <person name="Choudhary M."/>
            <person name="Donohue T.J."/>
            <person name="Kaplan S."/>
        </authorList>
    </citation>
    <scope>NUCLEOTIDE SEQUENCE [LARGE SCALE GENOMIC DNA]</scope>
    <source>
        <strain>ATCC 17025 / ATH 2.4.3</strain>
    </source>
</reference>
<dbReference type="EC" id="6.3.5.-" evidence="1"/>
<dbReference type="EMBL" id="CP000661">
    <property type="protein sequence ID" value="ABP71969.1"/>
    <property type="molecule type" value="Genomic_DNA"/>
</dbReference>
<dbReference type="SMR" id="A4WX55"/>
<dbReference type="STRING" id="349102.Rsph17025_3085"/>
<dbReference type="KEGG" id="rsq:Rsph17025_3085"/>
<dbReference type="eggNOG" id="COG0064">
    <property type="taxonomic scope" value="Bacteria"/>
</dbReference>
<dbReference type="HOGENOM" id="CLU_019240_0_0_5"/>
<dbReference type="BioCyc" id="RSPH349102:G1G8M-3188-MONOMER"/>
<dbReference type="GO" id="GO:0050566">
    <property type="term" value="F:asparaginyl-tRNA synthase (glutamine-hydrolyzing) activity"/>
    <property type="evidence" value="ECO:0007669"/>
    <property type="project" value="RHEA"/>
</dbReference>
<dbReference type="GO" id="GO:0005524">
    <property type="term" value="F:ATP binding"/>
    <property type="evidence" value="ECO:0007669"/>
    <property type="project" value="UniProtKB-KW"/>
</dbReference>
<dbReference type="GO" id="GO:0050567">
    <property type="term" value="F:glutaminyl-tRNA synthase (glutamine-hydrolyzing) activity"/>
    <property type="evidence" value="ECO:0007669"/>
    <property type="project" value="UniProtKB-UniRule"/>
</dbReference>
<dbReference type="GO" id="GO:0070681">
    <property type="term" value="P:glutaminyl-tRNAGln biosynthesis via transamidation"/>
    <property type="evidence" value="ECO:0007669"/>
    <property type="project" value="TreeGrafter"/>
</dbReference>
<dbReference type="GO" id="GO:0006412">
    <property type="term" value="P:translation"/>
    <property type="evidence" value="ECO:0007669"/>
    <property type="project" value="UniProtKB-UniRule"/>
</dbReference>
<dbReference type="FunFam" id="1.10.10.410:FF:000001">
    <property type="entry name" value="Aspartyl/glutamyl-tRNA(Asn/Gln) amidotransferase subunit B"/>
    <property type="match status" value="1"/>
</dbReference>
<dbReference type="FunFam" id="1.10.150.380:FF:000001">
    <property type="entry name" value="Aspartyl/glutamyl-tRNA(Asn/Gln) amidotransferase subunit B"/>
    <property type="match status" value="1"/>
</dbReference>
<dbReference type="Gene3D" id="1.10.10.410">
    <property type="match status" value="1"/>
</dbReference>
<dbReference type="Gene3D" id="1.10.150.380">
    <property type="entry name" value="GatB domain, N-terminal subdomain"/>
    <property type="match status" value="1"/>
</dbReference>
<dbReference type="HAMAP" id="MF_00121">
    <property type="entry name" value="GatB"/>
    <property type="match status" value="1"/>
</dbReference>
<dbReference type="InterPro" id="IPR017959">
    <property type="entry name" value="Asn/Gln-tRNA_amidoTrfase_suB/E"/>
</dbReference>
<dbReference type="InterPro" id="IPR006075">
    <property type="entry name" value="Asn/Gln-tRNA_Trfase_suB/E_cat"/>
</dbReference>
<dbReference type="InterPro" id="IPR018027">
    <property type="entry name" value="Asn/Gln_amidotransferase"/>
</dbReference>
<dbReference type="InterPro" id="IPR003789">
    <property type="entry name" value="Asn/Gln_tRNA_amidoTrase-B-like"/>
</dbReference>
<dbReference type="InterPro" id="IPR004413">
    <property type="entry name" value="GatB"/>
</dbReference>
<dbReference type="InterPro" id="IPR042114">
    <property type="entry name" value="GatB_C_1"/>
</dbReference>
<dbReference type="InterPro" id="IPR023168">
    <property type="entry name" value="GatB_Yqey_C_2"/>
</dbReference>
<dbReference type="InterPro" id="IPR017958">
    <property type="entry name" value="Gln-tRNA_amidoTrfase_suB_CS"/>
</dbReference>
<dbReference type="InterPro" id="IPR014746">
    <property type="entry name" value="Gln_synth/guanido_kin_cat_dom"/>
</dbReference>
<dbReference type="NCBIfam" id="TIGR00133">
    <property type="entry name" value="gatB"/>
    <property type="match status" value="1"/>
</dbReference>
<dbReference type="NCBIfam" id="NF004012">
    <property type="entry name" value="PRK05477.1-2"/>
    <property type="match status" value="1"/>
</dbReference>
<dbReference type="NCBIfam" id="NF004014">
    <property type="entry name" value="PRK05477.1-4"/>
    <property type="match status" value="1"/>
</dbReference>
<dbReference type="NCBIfam" id="NF004015">
    <property type="entry name" value="PRK05477.1-5"/>
    <property type="match status" value="1"/>
</dbReference>
<dbReference type="PANTHER" id="PTHR11659">
    <property type="entry name" value="GLUTAMYL-TRNA GLN AMIDOTRANSFERASE SUBUNIT B MITOCHONDRIAL AND PROKARYOTIC PET112-RELATED"/>
    <property type="match status" value="1"/>
</dbReference>
<dbReference type="PANTHER" id="PTHR11659:SF0">
    <property type="entry name" value="GLUTAMYL-TRNA(GLN) AMIDOTRANSFERASE SUBUNIT B, MITOCHONDRIAL"/>
    <property type="match status" value="1"/>
</dbReference>
<dbReference type="Pfam" id="PF02934">
    <property type="entry name" value="GatB_N"/>
    <property type="match status" value="1"/>
</dbReference>
<dbReference type="Pfam" id="PF02637">
    <property type="entry name" value="GatB_Yqey"/>
    <property type="match status" value="1"/>
</dbReference>
<dbReference type="SMART" id="SM00845">
    <property type="entry name" value="GatB_Yqey"/>
    <property type="match status" value="1"/>
</dbReference>
<dbReference type="SUPFAM" id="SSF89095">
    <property type="entry name" value="GatB/YqeY motif"/>
    <property type="match status" value="1"/>
</dbReference>
<dbReference type="SUPFAM" id="SSF55931">
    <property type="entry name" value="Glutamine synthetase/guanido kinase"/>
    <property type="match status" value="1"/>
</dbReference>
<dbReference type="PROSITE" id="PS01234">
    <property type="entry name" value="GATB"/>
    <property type="match status" value="1"/>
</dbReference>
<feature type="chain" id="PRO_1000016032" description="Aspartyl/glutamyl-tRNA(Asn/Gln) amidotransferase subunit B">
    <location>
        <begin position="1"/>
        <end position="503"/>
    </location>
</feature>
<gene>
    <name evidence="1" type="primary">gatB</name>
    <name type="ordered locus">Rsph17025_3085</name>
</gene>
<accession>A4WX55</accession>
<keyword id="KW-0067">ATP-binding</keyword>
<keyword id="KW-0436">Ligase</keyword>
<keyword id="KW-0547">Nucleotide-binding</keyword>
<keyword id="KW-0648">Protein biosynthesis</keyword>
<proteinExistence type="inferred from homology"/>
<sequence>MLDLTYETPKPKVIAGAKHDWELVIGMEIHAQVSSNAKLFSGASTTFGAEPNSNVSFVDCAMPGMLPVINDFCVAQAVRTGLGLKAQINLVSAFDRKNYFYPDLPQGYQISQLYHPIVGEGEVLVEMGPGVARLVRIERIHLEQDAGKSIHDMDPNLSFVDFNRTGVALMEIVSRPDIRGPEEAAAYVAKLRQILRYLGTCDGNMQNGNLRADVNVSVCRPGDYERYQATQDFSHLGTRCEIKNMNSMRFIQQAIEYEARRQIAILEDGGKVVQETRLYDPDKGETRSMRSKEEAHDYRYFPDPDLLPLEIEQAWVDEIATSMPELPDAKKARFMADYGVTDYDANVLTAELDAAAFFEAVAKGRDGKQAANWVINELFGRLNKQGLTIAEAPVSAAQLGGVLDLIASGEISGKMAKDLFEILWTEGGDPAEVAAARGMKQVTDTGAIETAVDEIIAANPAQVEKAKANPKLAGWFVGQVIKATGGKANPAAVNQIVAQKLGL</sequence>
<protein>
    <recommendedName>
        <fullName evidence="1">Aspartyl/glutamyl-tRNA(Asn/Gln) amidotransferase subunit B</fullName>
        <shortName evidence="1">Asp/Glu-ADT subunit B</shortName>
        <ecNumber evidence="1">6.3.5.-</ecNumber>
    </recommendedName>
</protein>
<organism>
    <name type="scientific">Cereibacter sphaeroides (strain ATCC 17025 / ATH 2.4.3)</name>
    <name type="common">Rhodobacter sphaeroides</name>
    <dbReference type="NCBI Taxonomy" id="349102"/>
    <lineage>
        <taxon>Bacteria</taxon>
        <taxon>Pseudomonadati</taxon>
        <taxon>Pseudomonadota</taxon>
        <taxon>Alphaproteobacteria</taxon>
        <taxon>Rhodobacterales</taxon>
        <taxon>Paracoccaceae</taxon>
        <taxon>Cereibacter</taxon>
    </lineage>
</organism>
<comment type="function">
    <text evidence="1">Allows the formation of correctly charged Asn-tRNA(Asn) or Gln-tRNA(Gln) through the transamidation of misacylated Asp-tRNA(Asn) or Glu-tRNA(Gln) in organisms which lack either or both of asparaginyl-tRNA or glutaminyl-tRNA synthetases. The reaction takes place in the presence of glutamine and ATP through an activated phospho-Asp-tRNA(Asn) or phospho-Glu-tRNA(Gln).</text>
</comment>
<comment type="catalytic activity">
    <reaction evidence="1">
        <text>L-glutamyl-tRNA(Gln) + L-glutamine + ATP + H2O = L-glutaminyl-tRNA(Gln) + L-glutamate + ADP + phosphate + H(+)</text>
        <dbReference type="Rhea" id="RHEA:17521"/>
        <dbReference type="Rhea" id="RHEA-COMP:9681"/>
        <dbReference type="Rhea" id="RHEA-COMP:9684"/>
        <dbReference type="ChEBI" id="CHEBI:15377"/>
        <dbReference type="ChEBI" id="CHEBI:15378"/>
        <dbReference type="ChEBI" id="CHEBI:29985"/>
        <dbReference type="ChEBI" id="CHEBI:30616"/>
        <dbReference type="ChEBI" id="CHEBI:43474"/>
        <dbReference type="ChEBI" id="CHEBI:58359"/>
        <dbReference type="ChEBI" id="CHEBI:78520"/>
        <dbReference type="ChEBI" id="CHEBI:78521"/>
        <dbReference type="ChEBI" id="CHEBI:456216"/>
    </reaction>
</comment>
<comment type="catalytic activity">
    <reaction evidence="1">
        <text>L-aspartyl-tRNA(Asn) + L-glutamine + ATP + H2O = L-asparaginyl-tRNA(Asn) + L-glutamate + ADP + phosphate + 2 H(+)</text>
        <dbReference type="Rhea" id="RHEA:14513"/>
        <dbReference type="Rhea" id="RHEA-COMP:9674"/>
        <dbReference type="Rhea" id="RHEA-COMP:9677"/>
        <dbReference type="ChEBI" id="CHEBI:15377"/>
        <dbReference type="ChEBI" id="CHEBI:15378"/>
        <dbReference type="ChEBI" id="CHEBI:29985"/>
        <dbReference type="ChEBI" id="CHEBI:30616"/>
        <dbReference type="ChEBI" id="CHEBI:43474"/>
        <dbReference type="ChEBI" id="CHEBI:58359"/>
        <dbReference type="ChEBI" id="CHEBI:78515"/>
        <dbReference type="ChEBI" id="CHEBI:78516"/>
        <dbReference type="ChEBI" id="CHEBI:456216"/>
    </reaction>
</comment>
<comment type="subunit">
    <text evidence="1">Heterotrimer of A, B and C subunits.</text>
</comment>
<comment type="similarity">
    <text evidence="1">Belongs to the GatB/GatE family. GatB subfamily.</text>
</comment>
<evidence type="ECO:0000255" key="1">
    <source>
        <dbReference type="HAMAP-Rule" id="MF_00121"/>
    </source>
</evidence>